<comment type="function">
    <text evidence="1">Hydrolyzes glucose-6-phosphate to glucose in the endoplasmic reticulum. May form with the glucose-6-phosphate transporter (SLC37A4/G6PT) a ubiquitously expressed complex responsible for glucose production through glycogenolysis and gluconeogenesis. Probably required for normal neutrophil function (By similarity).</text>
</comment>
<comment type="catalytic activity">
    <reaction>
        <text>D-glucose 6-phosphate + H2O = D-glucose + phosphate</text>
        <dbReference type="Rhea" id="RHEA:16689"/>
        <dbReference type="ChEBI" id="CHEBI:4167"/>
        <dbReference type="ChEBI" id="CHEBI:15377"/>
        <dbReference type="ChEBI" id="CHEBI:43474"/>
        <dbReference type="ChEBI" id="CHEBI:61548"/>
        <dbReference type="EC" id="3.1.3.9"/>
    </reaction>
</comment>
<comment type="activity regulation">
    <text evidence="1">Inhibited by vanadate.</text>
</comment>
<comment type="pathway">
    <text>Carbohydrate biosynthesis; gluconeogenesis.</text>
</comment>
<comment type="subcellular location">
    <subcellularLocation>
        <location evidence="1">Endoplasmic reticulum membrane</location>
        <topology evidence="1">Multi-pass membrane protein</topology>
    </subcellularLocation>
</comment>
<comment type="similarity">
    <text evidence="3">Belongs to the glucose-6-phosphatase family.</text>
</comment>
<dbReference type="EC" id="3.1.3.9"/>
<dbReference type="EMBL" id="AY279358">
    <property type="protein sequence ID" value="AAP40635.1"/>
    <property type="molecule type" value="mRNA"/>
</dbReference>
<dbReference type="EMBL" id="BC118357">
    <property type="protein sequence ID" value="AAI18358.1"/>
    <property type="molecule type" value="mRNA"/>
</dbReference>
<dbReference type="RefSeq" id="NP_899208.2">
    <property type="nucleotide sequence ID" value="NM_183364.3"/>
</dbReference>
<dbReference type="SMR" id="Q148G2"/>
<dbReference type="FunCoup" id="Q148G2">
    <property type="interactions" value="2320"/>
</dbReference>
<dbReference type="STRING" id="9913.ENSBTAP00000021621"/>
<dbReference type="PaxDb" id="9913-ENSBTAP00000021621"/>
<dbReference type="Ensembl" id="ENSBTAT00000021621.5">
    <property type="protein sequence ID" value="ENSBTAP00000021621.3"/>
    <property type="gene ID" value="ENSBTAG00000016253.5"/>
</dbReference>
<dbReference type="GeneID" id="369023"/>
<dbReference type="KEGG" id="bta:369023"/>
<dbReference type="CTD" id="92579"/>
<dbReference type="VEuPathDB" id="HostDB:ENSBTAG00000016253"/>
<dbReference type="VGNC" id="VGNC:29180">
    <property type="gene designation" value="G6PC3"/>
</dbReference>
<dbReference type="eggNOG" id="ENOG502QS5D">
    <property type="taxonomic scope" value="Eukaryota"/>
</dbReference>
<dbReference type="GeneTree" id="ENSGT00950000183150"/>
<dbReference type="HOGENOM" id="CLU_052517_0_0_1"/>
<dbReference type="InParanoid" id="Q148G2"/>
<dbReference type="OMA" id="KKWCSRA"/>
<dbReference type="OrthoDB" id="6416209at2759"/>
<dbReference type="TreeFam" id="TF324388"/>
<dbReference type="Reactome" id="R-BTA-70263">
    <property type="pathway name" value="Gluconeogenesis"/>
</dbReference>
<dbReference type="UniPathway" id="UPA00138"/>
<dbReference type="Proteomes" id="UP000009136">
    <property type="component" value="Chromosome 19"/>
</dbReference>
<dbReference type="Bgee" id="ENSBTAG00000016253">
    <property type="expression patterns" value="Expressed in pigment epithelium of eye and 106 other cell types or tissues"/>
</dbReference>
<dbReference type="GO" id="GO:0005789">
    <property type="term" value="C:endoplasmic reticulum membrane"/>
    <property type="evidence" value="ECO:0007669"/>
    <property type="project" value="UniProtKB-SubCell"/>
</dbReference>
<dbReference type="GO" id="GO:0016020">
    <property type="term" value="C:membrane"/>
    <property type="evidence" value="ECO:0000318"/>
    <property type="project" value="GO_Central"/>
</dbReference>
<dbReference type="GO" id="GO:0004346">
    <property type="term" value="F:glucose-6-phosphatase activity"/>
    <property type="evidence" value="ECO:0000250"/>
    <property type="project" value="UniProtKB"/>
</dbReference>
<dbReference type="GO" id="GO:0006094">
    <property type="term" value="P:gluconeogenesis"/>
    <property type="evidence" value="ECO:0000318"/>
    <property type="project" value="GO_Central"/>
</dbReference>
<dbReference type="GO" id="GO:0051156">
    <property type="term" value="P:glucose 6-phosphate metabolic process"/>
    <property type="evidence" value="ECO:0000318"/>
    <property type="project" value="GO_Central"/>
</dbReference>
<dbReference type="GO" id="GO:0015760">
    <property type="term" value="P:glucose-6-phosphate transport"/>
    <property type="evidence" value="ECO:0007669"/>
    <property type="project" value="Ensembl"/>
</dbReference>
<dbReference type="CDD" id="cd03381">
    <property type="entry name" value="PAP2_glucose_6_phosphatase"/>
    <property type="match status" value="1"/>
</dbReference>
<dbReference type="FunFam" id="1.20.144.10:FF:000018">
    <property type="entry name" value="Glucose-6-phosphatase"/>
    <property type="match status" value="1"/>
</dbReference>
<dbReference type="Gene3D" id="1.20.144.10">
    <property type="entry name" value="Phosphatidic acid phosphatase type 2/haloperoxidase"/>
    <property type="match status" value="1"/>
</dbReference>
<dbReference type="InterPro" id="IPR016275">
    <property type="entry name" value="Glucose-6-phosphatase"/>
</dbReference>
<dbReference type="InterPro" id="IPR036938">
    <property type="entry name" value="P_Acid_Pase_2/haloperoxi_sf"/>
</dbReference>
<dbReference type="InterPro" id="IPR000326">
    <property type="entry name" value="P_Acid_Pase_2/haloperoxidase"/>
</dbReference>
<dbReference type="PANTHER" id="PTHR12591">
    <property type="entry name" value="GLUCOSE-6-PHOSPHATASE"/>
    <property type="match status" value="1"/>
</dbReference>
<dbReference type="PANTHER" id="PTHR12591:SF2">
    <property type="entry name" value="GLUCOSE-6-PHOSPHATASE 3"/>
    <property type="match status" value="1"/>
</dbReference>
<dbReference type="Pfam" id="PF01569">
    <property type="entry name" value="PAP2"/>
    <property type="match status" value="1"/>
</dbReference>
<dbReference type="PIRSF" id="PIRSF000905">
    <property type="entry name" value="Glucose-6-phosphatase"/>
    <property type="match status" value="1"/>
</dbReference>
<dbReference type="SMART" id="SM00014">
    <property type="entry name" value="acidPPc"/>
    <property type="match status" value="1"/>
</dbReference>
<dbReference type="SUPFAM" id="SSF48317">
    <property type="entry name" value="Acid phosphatase/Vanadium-dependent haloperoxidase"/>
    <property type="match status" value="1"/>
</dbReference>
<organism>
    <name type="scientific">Bos taurus</name>
    <name type="common">Bovine</name>
    <dbReference type="NCBI Taxonomy" id="9913"/>
    <lineage>
        <taxon>Eukaryota</taxon>
        <taxon>Metazoa</taxon>
        <taxon>Chordata</taxon>
        <taxon>Craniata</taxon>
        <taxon>Vertebrata</taxon>
        <taxon>Euteleostomi</taxon>
        <taxon>Mammalia</taxon>
        <taxon>Eutheria</taxon>
        <taxon>Laurasiatheria</taxon>
        <taxon>Artiodactyla</taxon>
        <taxon>Ruminantia</taxon>
        <taxon>Pecora</taxon>
        <taxon>Bovidae</taxon>
        <taxon>Bovinae</taxon>
        <taxon>Bos</taxon>
    </lineage>
</organism>
<reference key="1">
    <citation type="submission" date="2003-04" db="EMBL/GenBank/DDBJ databases">
        <authorList>
            <person name="Clottes E."/>
            <person name="Mounier R."/>
            <person name="Rossignol F."/>
            <person name="Bonnefont J."/>
            <person name="Guionie O."/>
            <person name="Burchell A."/>
        </authorList>
    </citation>
    <scope>NUCLEOTIDE SEQUENCE [MRNA]</scope>
    <source>
        <tissue>Testis</tissue>
    </source>
</reference>
<reference key="2">
    <citation type="submission" date="2006-06" db="EMBL/GenBank/DDBJ databases">
        <authorList>
            <consortium name="NIH - Mammalian Gene Collection (MGC) project"/>
        </authorList>
    </citation>
    <scope>NUCLEOTIDE SEQUENCE [LARGE SCALE MRNA]</scope>
    <source>
        <strain>Hereford</strain>
        <tissue>Fetal cerebellum</tissue>
    </source>
</reference>
<gene>
    <name type="primary">G6PC3</name>
</gene>
<accession>Q148G2</accession>
<accession>Q7YSF2</accession>
<proteinExistence type="evidence at transcript level"/>
<sequence length="346" mass="38742">MESTLGAGIAMAEALQNQLPWLENVWLWVTFLGDPKSLFLFYFPAAYYASRRVGIAVLWISLITEWLNLVFKWFLFGDRPFWWVHESGYYSQAPAQVHQFPSSCETGPGSPSGHCMITGAALWPIMTAVSSQMATRAHSRWVRVIPSLAYCTFLLAVGLSRVFLLAHFPHQVLAGLITGAVLGWLMTPQVPMERELSFYGLTSLALLLGASLIYWTLFTLGLDLSWSINLASKWCERPEWVHLDSRPFASLSRDSGAALGLGIALHSPCYAQVRRAHLGYGQKLVCLVLAMGLLGPLNWLGYPPQISLFYIFNFLKYTLWPCLVLALVPWLVHMFSAQEAPPIRSS</sequence>
<keyword id="KW-0256">Endoplasmic reticulum</keyword>
<keyword id="KW-0312">Gluconeogenesis</keyword>
<keyword id="KW-0378">Hydrolase</keyword>
<keyword id="KW-0472">Membrane</keyword>
<keyword id="KW-1185">Reference proteome</keyword>
<keyword id="KW-0812">Transmembrane</keyword>
<keyword id="KW-1133">Transmembrane helix</keyword>
<protein>
    <recommendedName>
        <fullName>Glucose-6-phosphatase 3</fullName>
        <shortName>G-6-Pase 3</shortName>
        <shortName>G6Pase 3</shortName>
        <ecNumber>3.1.3.9</ecNumber>
    </recommendedName>
</protein>
<evidence type="ECO:0000250" key="1"/>
<evidence type="ECO:0000255" key="2"/>
<evidence type="ECO:0000305" key="3"/>
<name>G6PC3_BOVIN</name>
<feature type="chain" id="PRO_0000334511" description="Glucose-6-phosphatase 3">
    <location>
        <begin position="1"/>
        <end position="346"/>
    </location>
</feature>
<feature type="topological domain" description="Lumenal" evidence="2">
    <location>
        <begin position="1"/>
        <end position="24"/>
    </location>
</feature>
<feature type="transmembrane region" description="Helical" evidence="2">
    <location>
        <begin position="25"/>
        <end position="45"/>
    </location>
</feature>
<feature type="topological domain" description="Cytoplasmic" evidence="2">
    <location>
        <begin position="46"/>
        <end position="54"/>
    </location>
</feature>
<feature type="transmembrane region" description="Helical" evidence="2">
    <location>
        <begin position="55"/>
        <end position="75"/>
    </location>
</feature>
<feature type="topological domain" description="Lumenal" evidence="2">
    <location>
        <begin position="76"/>
        <end position="108"/>
    </location>
</feature>
<feature type="transmembrane region" description="Helical" evidence="2">
    <location>
        <begin position="109"/>
        <end position="129"/>
    </location>
</feature>
<feature type="topological domain" description="Cytoplasmic" evidence="2">
    <location>
        <begin position="130"/>
        <end position="140"/>
    </location>
</feature>
<feature type="transmembrane region" description="Helical" evidence="2">
    <location>
        <begin position="141"/>
        <end position="162"/>
    </location>
</feature>
<feature type="topological domain" description="Lumenal" evidence="2">
    <location>
        <begin position="163"/>
        <end position="167"/>
    </location>
</feature>
<feature type="transmembrane region" description="Helical" evidence="2">
    <location>
        <begin position="168"/>
        <end position="186"/>
    </location>
</feature>
<feature type="topological domain" description="Cytoplasmic" evidence="2">
    <location>
        <begin position="187"/>
        <end position="197"/>
    </location>
</feature>
<feature type="transmembrane region" description="Helical" evidence="2">
    <location>
        <begin position="198"/>
        <end position="218"/>
    </location>
</feature>
<feature type="topological domain" description="Lumenal" evidence="2">
    <location>
        <begin position="219"/>
        <end position="254"/>
    </location>
</feature>
<feature type="transmembrane region" description="Helical" evidence="2">
    <location>
        <begin position="255"/>
        <end position="273"/>
    </location>
</feature>
<feature type="topological domain" description="Cytoplasmic" evidence="2">
    <location>
        <begin position="274"/>
        <end position="283"/>
    </location>
</feature>
<feature type="transmembrane region" description="Helical" evidence="2">
    <location>
        <begin position="284"/>
        <end position="304"/>
    </location>
</feature>
<feature type="topological domain" description="Lumenal" evidence="2">
    <location>
        <begin position="305"/>
        <end position="307"/>
    </location>
</feature>
<feature type="transmembrane region" description="Helical" evidence="2">
    <location>
        <begin position="308"/>
        <end position="328"/>
    </location>
</feature>
<feature type="topological domain" description="Cytoplasmic" evidence="2">
    <location>
        <begin position="329"/>
        <end position="346"/>
    </location>
</feature>
<feature type="active site" description="Proton donor" evidence="2">
    <location>
        <position position="114"/>
    </location>
</feature>
<feature type="active site" description="Nucleophile" evidence="1">
    <location>
        <position position="167"/>
    </location>
</feature>
<feature type="binding site" evidence="2">
    <location>
        <position position="79"/>
    </location>
    <ligand>
        <name>substrate</name>
    </ligand>
</feature>
<feature type="binding site" evidence="2">
    <location>
        <position position="161"/>
    </location>
    <ligand>
        <name>substrate</name>
    </ligand>
</feature>
<feature type="sequence conflict" description="In Ref. 1; AAP40635." evidence="3" ref="1">
    <original>E</original>
    <variation>G</variation>
    <location>
        <position position="239"/>
    </location>
</feature>